<feature type="signal peptide">
    <location>
        <begin position="1"/>
        <end position="19"/>
    </location>
</feature>
<feature type="chain" id="PRO_0000006269" description="Cysteine-rich secretory protein 3">
    <location>
        <begin position="20"/>
        <end position="241"/>
    </location>
</feature>
<feature type="domain" description="SCP">
    <location>
        <begin position="44"/>
        <end position="170"/>
    </location>
</feature>
<feature type="domain" description="ShKT" evidence="3">
    <location>
        <begin position="210"/>
        <end position="241"/>
    </location>
</feature>
<feature type="glycosylation site" description="N-linked (GlcNAc...) asparagine" evidence="2">
    <location>
        <position position="118"/>
    </location>
</feature>
<feature type="glycosylation site" description="N-linked (GlcNAc...) asparagine" evidence="2">
    <location>
        <position position="132"/>
    </location>
</feature>
<feature type="glycosylation site" description="N-linked (GlcNAc...) asparagine" evidence="2">
    <location>
        <position position="175"/>
    </location>
</feature>
<feature type="disulfide bond" evidence="3">
    <location>
        <begin position="194"/>
        <end position="201"/>
    </location>
</feature>
<feature type="disulfide bond" evidence="3">
    <location>
        <begin position="197"/>
        <end position="206"/>
    </location>
</feature>
<feature type="disulfide bond" evidence="3">
    <location>
        <begin position="210"/>
        <end position="241"/>
    </location>
</feature>
<feature type="disulfide bond" evidence="3">
    <location>
        <begin position="219"/>
        <end position="235"/>
    </location>
</feature>
<feature type="disulfide bond" evidence="3">
    <location>
        <begin position="226"/>
        <end position="239"/>
    </location>
</feature>
<gene>
    <name type="primary">Crisp3</name>
    <name type="synonym">Aeg-2</name>
    <name type="synonym">Aeg2</name>
</gene>
<protein>
    <recommendedName>
        <fullName>Cysteine-rich secretory protein 3</fullName>
        <shortName>CRISP-3</shortName>
    </recommendedName>
    <alternativeName>
        <fullName>Acidic epididymal glycoprotein 2</fullName>
    </alternativeName>
    <alternativeName>
        <fullName>Sperm-coating glycoprotein 2</fullName>
        <shortName>SCP 2</shortName>
    </alternativeName>
</protein>
<dbReference type="EMBL" id="M92850">
    <property type="protein sequence ID" value="AAA37186.1"/>
    <property type="molecule type" value="mRNA"/>
</dbReference>
<dbReference type="EMBL" id="L05560">
    <property type="protein sequence ID" value="AAA37461.1"/>
    <property type="molecule type" value="mRNA"/>
</dbReference>
<dbReference type="EMBL" id="CH466559">
    <property type="protein sequence ID" value="EDL23382.1"/>
    <property type="molecule type" value="Genomic_DNA"/>
</dbReference>
<dbReference type="EMBL" id="BC022573">
    <property type="protein sequence ID" value="AAH22573.1"/>
    <property type="molecule type" value="mRNA"/>
</dbReference>
<dbReference type="EMBL" id="BC132536">
    <property type="protein sequence ID" value="AAI32537.1"/>
    <property type="molecule type" value="mRNA"/>
</dbReference>
<dbReference type="EMBL" id="BC132538">
    <property type="protein sequence ID" value="AAI32539.1"/>
    <property type="molecule type" value="mRNA"/>
</dbReference>
<dbReference type="CCDS" id="CCDS28783.1"/>
<dbReference type="PIR" id="B49202">
    <property type="entry name" value="B49202"/>
</dbReference>
<dbReference type="RefSeq" id="NP_033769.1">
    <property type="nucleotide sequence ID" value="NM_009639.3"/>
</dbReference>
<dbReference type="SMR" id="Q03402"/>
<dbReference type="FunCoup" id="Q03402">
    <property type="interactions" value="67"/>
</dbReference>
<dbReference type="STRING" id="10090.ENSMUSP00000026499"/>
<dbReference type="GlyCosmos" id="Q03402">
    <property type="glycosylation" value="3 sites, No reported glycans"/>
</dbReference>
<dbReference type="GlyGen" id="Q03402">
    <property type="glycosylation" value="3 sites"/>
</dbReference>
<dbReference type="PhosphoSitePlus" id="Q03402"/>
<dbReference type="PaxDb" id="10090-ENSMUSP00000026499"/>
<dbReference type="PeptideAtlas" id="Q03402"/>
<dbReference type="ProteomicsDB" id="285333"/>
<dbReference type="DNASU" id="11572"/>
<dbReference type="Ensembl" id="ENSMUST00000026499.6">
    <property type="protein sequence ID" value="ENSMUSP00000026499.6"/>
    <property type="gene ID" value="ENSMUSG00000025433.8"/>
</dbReference>
<dbReference type="GeneID" id="11572"/>
<dbReference type="KEGG" id="mmu:11572"/>
<dbReference type="UCSC" id="uc008cog.1">
    <property type="organism name" value="mouse"/>
</dbReference>
<dbReference type="AGR" id="MGI:102552"/>
<dbReference type="CTD" id="10321"/>
<dbReference type="MGI" id="MGI:102552">
    <property type="gene designation" value="Crisp3"/>
</dbReference>
<dbReference type="VEuPathDB" id="HostDB:ENSMUSG00000025433"/>
<dbReference type="eggNOG" id="KOG3017">
    <property type="taxonomic scope" value="Eukaryota"/>
</dbReference>
<dbReference type="GeneTree" id="ENSGT00940000162013"/>
<dbReference type="HOGENOM" id="CLU_035730_2_1_1"/>
<dbReference type="InParanoid" id="Q03402"/>
<dbReference type="OMA" id="CEYENIY"/>
<dbReference type="OrthoDB" id="737510at2759"/>
<dbReference type="PhylomeDB" id="Q03402"/>
<dbReference type="TreeFam" id="TF316148"/>
<dbReference type="BioGRID-ORCS" id="11572">
    <property type="hits" value="1 hit in 77 CRISPR screens"/>
</dbReference>
<dbReference type="ChiTaRS" id="Crisp3">
    <property type="organism name" value="mouse"/>
</dbReference>
<dbReference type="PRO" id="PR:Q03402"/>
<dbReference type="Proteomes" id="UP000000589">
    <property type="component" value="Chromosome 17"/>
</dbReference>
<dbReference type="RNAct" id="Q03402">
    <property type="molecule type" value="protein"/>
</dbReference>
<dbReference type="Bgee" id="ENSMUSG00000025433">
    <property type="expression patterns" value="Expressed in submandibular gland and 29 other cell types or tissues"/>
</dbReference>
<dbReference type="GO" id="GO:0005576">
    <property type="term" value="C:extracellular region"/>
    <property type="evidence" value="ECO:0007669"/>
    <property type="project" value="InterPro"/>
</dbReference>
<dbReference type="GO" id="GO:0030133">
    <property type="term" value="C:transport vesicle"/>
    <property type="evidence" value="ECO:0007669"/>
    <property type="project" value="UniProtKB-SubCell"/>
</dbReference>
<dbReference type="FunFam" id="3.40.33.10:FF:000005">
    <property type="entry name" value="Cysteine-rich secretory protein 2"/>
    <property type="match status" value="1"/>
</dbReference>
<dbReference type="Gene3D" id="3.40.33.10">
    <property type="entry name" value="CAP"/>
    <property type="match status" value="1"/>
</dbReference>
<dbReference type="Gene3D" id="1.10.10.740">
    <property type="entry name" value="Crisp domain"/>
    <property type="match status" value="1"/>
</dbReference>
<dbReference type="InterPro" id="IPR018244">
    <property type="entry name" value="Allrgn_V5/Tpx1_CS"/>
</dbReference>
<dbReference type="InterPro" id="IPR014044">
    <property type="entry name" value="CAP_dom"/>
</dbReference>
<dbReference type="InterPro" id="IPR035940">
    <property type="entry name" value="CAP_sf"/>
</dbReference>
<dbReference type="InterPro" id="IPR042076">
    <property type="entry name" value="Crisp-like_dom"/>
</dbReference>
<dbReference type="InterPro" id="IPR001283">
    <property type="entry name" value="CRISP-related"/>
</dbReference>
<dbReference type="InterPro" id="IPR013871">
    <property type="entry name" value="Cysteine_rich_secretory"/>
</dbReference>
<dbReference type="InterPro" id="IPR003582">
    <property type="entry name" value="ShKT_dom"/>
</dbReference>
<dbReference type="PANTHER" id="PTHR10334">
    <property type="entry name" value="CYSTEINE-RICH SECRETORY PROTEIN-RELATED"/>
    <property type="match status" value="1"/>
</dbReference>
<dbReference type="Pfam" id="PF00188">
    <property type="entry name" value="CAP"/>
    <property type="match status" value="1"/>
</dbReference>
<dbReference type="Pfam" id="PF08562">
    <property type="entry name" value="Crisp"/>
    <property type="match status" value="1"/>
</dbReference>
<dbReference type="PRINTS" id="PR00837">
    <property type="entry name" value="V5TPXLIKE"/>
</dbReference>
<dbReference type="SMART" id="SM00198">
    <property type="entry name" value="SCP"/>
    <property type="match status" value="1"/>
</dbReference>
<dbReference type="SUPFAM" id="SSF57546">
    <property type="entry name" value="Crisp domain-like"/>
    <property type="match status" value="1"/>
</dbReference>
<dbReference type="SUPFAM" id="SSF55797">
    <property type="entry name" value="PR-1-like"/>
    <property type="match status" value="1"/>
</dbReference>
<dbReference type="PROSITE" id="PS01009">
    <property type="entry name" value="CRISP_1"/>
    <property type="match status" value="1"/>
</dbReference>
<dbReference type="PROSITE" id="PS01010">
    <property type="entry name" value="CRISP_2"/>
    <property type="match status" value="1"/>
</dbReference>
<dbReference type="PROSITE" id="PS51670">
    <property type="entry name" value="SHKT"/>
    <property type="match status" value="1"/>
</dbReference>
<sequence length="241" mass="27314">MALMLVLFFLAAVLPPSLLQDNSQENSLEKLSTSKKSVQEEIVSKHNQLRRKVSPSGSDLLNMEWNYDAQVNAQQRADKCTFSHSPIELRTTNLKCGENLFMSSYLVPWSSVIQGWYNESKGLIFGVGPKQNVSVVGHHTQVVWKSNLQVACGVAECPENPLRYFYVCRYCPVLNYSGHYPSRPYLAYTARAPCASCPDRCEDGLCTKSCQYKDMSFWCKRLEYVCKHPGLKKRCLATCQC</sequence>
<accession>Q03402</accession>
<accession>A2RTK2</accession>
<comment type="function">
    <text>This protein is supposed to help spermatozoa undergo functional maturation while they move from the testis to the ductus deferens.</text>
</comment>
<comment type="subunit">
    <text evidence="1 4">Interacts with A1BG (By similarity). Interacts with KNG1 isoform LMW.</text>
</comment>
<comment type="subcellular location">
    <subcellularLocation>
        <location>Cytoplasmic vesicle</location>
        <location>Secretory vesicle</location>
    </subcellularLocation>
    <text>Stored in secretory granules of granular convoluted tubules cells.</text>
</comment>
<comment type="tissue specificity">
    <text>Expressed in submandibular gland.</text>
</comment>
<comment type="developmental stage">
    <text>Exponential increase between days 25 and 30 after birth.</text>
</comment>
<comment type="induction">
    <text>By androgens.</text>
</comment>
<comment type="similarity">
    <text evidence="5">Belongs to the CRISP family.</text>
</comment>
<evidence type="ECO:0000250" key="1"/>
<evidence type="ECO:0000255" key="2"/>
<evidence type="ECO:0000255" key="3">
    <source>
        <dbReference type="PROSITE-ProRule" id="PRU01005"/>
    </source>
</evidence>
<evidence type="ECO:0000269" key="4">
    <source>
    </source>
</evidence>
<evidence type="ECO:0000305" key="5"/>
<keyword id="KW-0968">Cytoplasmic vesicle</keyword>
<keyword id="KW-1015">Disulfide bond</keyword>
<keyword id="KW-0325">Glycoprotein</keyword>
<keyword id="KW-1185">Reference proteome</keyword>
<keyword id="KW-0732">Signal</keyword>
<name>CRIS3_MOUSE</name>
<proteinExistence type="evidence at protein level"/>
<reference key="1">
    <citation type="journal article" date="1992" name="Mol. Cell. Endocrinol.">
        <title>Mouse submandibular glands express an androgen-regulated transcript encoding an acidic epididymal glycoprotein-like molecule.</title>
        <authorList>
            <person name="Mizuki N."/>
            <person name="Kasahara M."/>
        </authorList>
    </citation>
    <scope>NUCLEOTIDE SEQUENCE [MRNA]</scope>
    <source>
        <tissue>Submandibular gland</tissue>
    </source>
</reference>
<reference key="2">
    <citation type="journal article" date="1993" name="Endocrinology">
        <title>Transcripts for cysteine-rich secretory protein-1 (CRISP-1; DE/AEG) and the novel related CRISP-3 are expressed under androgen control in the mouse salivary gland.</title>
        <authorList>
            <person name="Haendler B."/>
            <person name="Kraetzschmar J."/>
            <person name="Theuring F."/>
            <person name="Schleuning W.-D."/>
        </authorList>
    </citation>
    <scope>NUCLEOTIDE SEQUENCE [MRNA]</scope>
    <source>
        <tissue>Submandibular gland</tissue>
    </source>
</reference>
<reference key="3">
    <citation type="submission" date="2005-07" db="EMBL/GenBank/DDBJ databases">
        <authorList>
            <person name="Mural R.J."/>
            <person name="Adams M.D."/>
            <person name="Myers E.W."/>
            <person name="Smith H.O."/>
            <person name="Venter J.C."/>
        </authorList>
    </citation>
    <scope>NUCLEOTIDE SEQUENCE [LARGE SCALE GENOMIC DNA]</scope>
</reference>
<reference key="4">
    <citation type="journal article" date="2004" name="Genome Res.">
        <title>The status, quality, and expansion of the NIH full-length cDNA project: the Mammalian Gene Collection (MGC).</title>
        <authorList>
            <consortium name="The MGC Project Team"/>
        </authorList>
    </citation>
    <scope>NUCLEOTIDE SEQUENCE [LARGE SCALE MRNA]</scope>
    <source>
        <strain>FVB/N</strain>
        <tissue>Salivary gland</tissue>
    </source>
</reference>
<reference key="5">
    <citation type="journal article" date="2004" name="Biochemistry">
        <title>Cysteine-rich secretory protein 3 is a ligand of alpha1B-glycoprotein in human plasma.</title>
        <authorList>
            <person name="Udby L."/>
            <person name="Sorensen O.E."/>
            <person name="Pass J."/>
            <person name="Johnsen A.H."/>
            <person name="Behrendt N."/>
            <person name="Borregaard N."/>
            <person name="Kjeldsen L."/>
        </authorList>
    </citation>
    <scope>INTERACTION WITH KNG1</scope>
</reference>
<organism>
    <name type="scientific">Mus musculus</name>
    <name type="common">Mouse</name>
    <dbReference type="NCBI Taxonomy" id="10090"/>
    <lineage>
        <taxon>Eukaryota</taxon>
        <taxon>Metazoa</taxon>
        <taxon>Chordata</taxon>
        <taxon>Craniata</taxon>
        <taxon>Vertebrata</taxon>
        <taxon>Euteleostomi</taxon>
        <taxon>Mammalia</taxon>
        <taxon>Eutheria</taxon>
        <taxon>Euarchontoglires</taxon>
        <taxon>Glires</taxon>
        <taxon>Rodentia</taxon>
        <taxon>Myomorpha</taxon>
        <taxon>Muroidea</taxon>
        <taxon>Muridae</taxon>
        <taxon>Murinae</taxon>
        <taxon>Mus</taxon>
        <taxon>Mus</taxon>
    </lineage>
</organism>